<sequence length="610" mass="67461">MNNRVLVSVAWPYANGPRHIGHVAGFGVPSDVFARYQRMSGAEVLMVSGTDEHGTPLLVQADKEGVSVKELADRYNRQIVEDLAGLGLSYDLFTRTTTRNHYAVVQDLFKGLYENGYMIKETTMGAVSPSTGRTLPDRYIEGTCPICGASGARGDQCDNCGNQLDPADLINPVSKINGETPKFIETEHFLLDLPALADALAAWLKDRKDWRPNVLKFSLNLLEDLRPRAMSRDIDWGIPIPVEGWQDNGAKKLYVWFDAVVGYLSASIEWAYRTGDPEAWKKWWNDPESSGYYFMGKDNITFHSQIWPAELLGYQGKGAKAGSVHSLGELNLPTEVVSSEFLTMSGSKFSSSKGIVIYVKDFLKEFGADPLRYFIAVAGPENNDTDFTWDEFVRRVNNELANGWGNLVNRTVSMAYKNFGEVPTPGELTESDKKILAQAEEAFGVVGEALAHSRFKQGITHAMHIVGEANAYIAEQEPWKLAKDESQRERLATVLWTALQVVSDCNVLLTPYLPHIAQQVHETLGRDGVWAAKPQIVEVTDDMPVEPIGVGIPEAGQTYPVIMGDYAAQQARWARIDVQPGTALSKPKPLIAKLDPELGETGPEWAPVNP</sequence>
<organism>
    <name type="scientific">Corynebacterium diphtheriae (strain ATCC 700971 / NCTC 13129 / Biotype gravis)</name>
    <dbReference type="NCBI Taxonomy" id="257309"/>
    <lineage>
        <taxon>Bacteria</taxon>
        <taxon>Bacillati</taxon>
        <taxon>Actinomycetota</taxon>
        <taxon>Actinomycetes</taxon>
        <taxon>Mycobacteriales</taxon>
        <taxon>Corynebacteriaceae</taxon>
        <taxon>Corynebacterium</taxon>
    </lineage>
</organism>
<accession>Q6NIA5</accession>
<proteinExistence type="inferred from homology"/>
<reference key="1">
    <citation type="journal article" date="2003" name="Nucleic Acids Res.">
        <title>The complete genome sequence and analysis of Corynebacterium diphtheriae NCTC13129.</title>
        <authorList>
            <person name="Cerdeno-Tarraga A.-M."/>
            <person name="Efstratiou A."/>
            <person name="Dover L.G."/>
            <person name="Holden M.T.G."/>
            <person name="Pallen M.J."/>
            <person name="Bentley S.D."/>
            <person name="Besra G.S."/>
            <person name="Churcher C.M."/>
            <person name="James K.D."/>
            <person name="De Zoysa A."/>
            <person name="Chillingworth T."/>
            <person name="Cronin A."/>
            <person name="Dowd L."/>
            <person name="Feltwell T."/>
            <person name="Hamlin N."/>
            <person name="Holroyd S."/>
            <person name="Jagels K."/>
            <person name="Moule S."/>
            <person name="Quail M.A."/>
            <person name="Rabbinowitsch E."/>
            <person name="Rutherford K.M."/>
            <person name="Thomson N.R."/>
            <person name="Unwin L."/>
            <person name="Whitehead S."/>
            <person name="Barrell B.G."/>
            <person name="Parkhill J."/>
        </authorList>
    </citation>
    <scope>NUCLEOTIDE SEQUENCE [LARGE SCALE GENOMIC DNA]</scope>
    <source>
        <strain>ATCC 700971 / NCTC 13129 / Biotype gravis</strain>
    </source>
</reference>
<comment type="function">
    <text evidence="1">Is required not only for elongation of protein synthesis but also for the initiation of all mRNA translation through initiator tRNA(fMet) aminoacylation.</text>
</comment>
<comment type="catalytic activity">
    <reaction evidence="1">
        <text>tRNA(Met) + L-methionine + ATP = L-methionyl-tRNA(Met) + AMP + diphosphate</text>
        <dbReference type="Rhea" id="RHEA:13481"/>
        <dbReference type="Rhea" id="RHEA-COMP:9667"/>
        <dbReference type="Rhea" id="RHEA-COMP:9698"/>
        <dbReference type="ChEBI" id="CHEBI:30616"/>
        <dbReference type="ChEBI" id="CHEBI:33019"/>
        <dbReference type="ChEBI" id="CHEBI:57844"/>
        <dbReference type="ChEBI" id="CHEBI:78442"/>
        <dbReference type="ChEBI" id="CHEBI:78530"/>
        <dbReference type="ChEBI" id="CHEBI:456215"/>
        <dbReference type="EC" id="6.1.1.10"/>
    </reaction>
</comment>
<comment type="cofactor">
    <cofactor evidence="1">
        <name>Zn(2+)</name>
        <dbReference type="ChEBI" id="CHEBI:29105"/>
    </cofactor>
    <text evidence="1">Binds 1 zinc ion per subunit.</text>
</comment>
<comment type="subunit">
    <text evidence="1">Monomer.</text>
</comment>
<comment type="subcellular location">
    <subcellularLocation>
        <location evidence="1">Cytoplasm</location>
    </subcellularLocation>
</comment>
<comment type="similarity">
    <text evidence="1">Belongs to the class-I aminoacyl-tRNA synthetase family. MetG type 1 subfamily.</text>
</comment>
<feature type="chain" id="PRO_0000139125" description="Methionine--tRNA ligase">
    <location>
        <begin position="1"/>
        <end position="610"/>
    </location>
</feature>
<feature type="short sequence motif" description="'HIGH' region">
    <location>
        <begin position="12"/>
        <end position="22"/>
    </location>
</feature>
<feature type="short sequence motif" description="'KMSKS' region">
    <location>
        <begin position="348"/>
        <end position="352"/>
    </location>
</feature>
<feature type="binding site" evidence="1">
    <location>
        <position position="144"/>
    </location>
    <ligand>
        <name>Zn(2+)</name>
        <dbReference type="ChEBI" id="CHEBI:29105"/>
    </ligand>
</feature>
<feature type="binding site" evidence="1">
    <location>
        <position position="147"/>
    </location>
    <ligand>
        <name>Zn(2+)</name>
        <dbReference type="ChEBI" id="CHEBI:29105"/>
    </ligand>
</feature>
<feature type="binding site" evidence="1">
    <location>
        <position position="157"/>
    </location>
    <ligand>
        <name>Zn(2+)</name>
        <dbReference type="ChEBI" id="CHEBI:29105"/>
    </ligand>
</feature>
<feature type="binding site" evidence="1">
    <location>
        <position position="160"/>
    </location>
    <ligand>
        <name>Zn(2+)</name>
        <dbReference type="ChEBI" id="CHEBI:29105"/>
    </ligand>
</feature>
<feature type="binding site" evidence="1">
    <location>
        <position position="351"/>
    </location>
    <ligand>
        <name>ATP</name>
        <dbReference type="ChEBI" id="CHEBI:30616"/>
    </ligand>
</feature>
<keyword id="KW-0030">Aminoacyl-tRNA synthetase</keyword>
<keyword id="KW-0067">ATP-binding</keyword>
<keyword id="KW-0963">Cytoplasm</keyword>
<keyword id="KW-0436">Ligase</keyword>
<keyword id="KW-0479">Metal-binding</keyword>
<keyword id="KW-0547">Nucleotide-binding</keyword>
<keyword id="KW-0648">Protein biosynthesis</keyword>
<keyword id="KW-1185">Reference proteome</keyword>
<keyword id="KW-0862">Zinc</keyword>
<gene>
    <name evidence="1" type="primary">metG</name>
    <name type="ordered locus">DIP0872</name>
</gene>
<dbReference type="EC" id="6.1.1.10" evidence="1"/>
<dbReference type="EMBL" id="BX248356">
    <property type="protein sequence ID" value="CAE49389.1"/>
    <property type="molecule type" value="Genomic_DNA"/>
</dbReference>
<dbReference type="RefSeq" id="WP_003850767.1">
    <property type="nucleotide sequence ID" value="NC_002935.2"/>
</dbReference>
<dbReference type="SMR" id="Q6NIA5"/>
<dbReference type="STRING" id="257309.DIP0872"/>
<dbReference type="KEGG" id="cdi:DIP0872"/>
<dbReference type="HOGENOM" id="CLU_009710_1_2_11"/>
<dbReference type="Proteomes" id="UP000002198">
    <property type="component" value="Chromosome"/>
</dbReference>
<dbReference type="GO" id="GO:0005829">
    <property type="term" value="C:cytosol"/>
    <property type="evidence" value="ECO:0007669"/>
    <property type="project" value="TreeGrafter"/>
</dbReference>
<dbReference type="GO" id="GO:0005524">
    <property type="term" value="F:ATP binding"/>
    <property type="evidence" value="ECO:0007669"/>
    <property type="project" value="UniProtKB-UniRule"/>
</dbReference>
<dbReference type="GO" id="GO:0046872">
    <property type="term" value="F:metal ion binding"/>
    <property type="evidence" value="ECO:0007669"/>
    <property type="project" value="UniProtKB-KW"/>
</dbReference>
<dbReference type="GO" id="GO:0004825">
    <property type="term" value="F:methionine-tRNA ligase activity"/>
    <property type="evidence" value="ECO:0007669"/>
    <property type="project" value="UniProtKB-UniRule"/>
</dbReference>
<dbReference type="GO" id="GO:0006431">
    <property type="term" value="P:methionyl-tRNA aminoacylation"/>
    <property type="evidence" value="ECO:0007669"/>
    <property type="project" value="UniProtKB-UniRule"/>
</dbReference>
<dbReference type="CDD" id="cd07957">
    <property type="entry name" value="Anticodon_Ia_Met"/>
    <property type="match status" value="1"/>
</dbReference>
<dbReference type="FunFam" id="2.20.28.20:FF:000001">
    <property type="entry name" value="Methionine--tRNA ligase"/>
    <property type="match status" value="1"/>
</dbReference>
<dbReference type="Gene3D" id="3.40.50.620">
    <property type="entry name" value="HUPs"/>
    <property type="match status" value="1"/>
</dbReference>
<dbReference type="Gene3D" id="1.10.730.10">
    <property type="entry name" value="Isoleucyl-tRNA Synthetase, Domain 1"/>
    <property type="match status" value="1"/>
</dbReference>
<dbReference type="Gene3D" id="2.20.28.20">
    <property type="entry name" value="Methionyl-tRNA synthetase, Zn-domain"/>
    <property type="match status" value="1"/>
</dbReference>
<dbReference type="HAMAP" id="MF_00098">
    <property type="entry name" value="Met_tRNA_synth_type1"/>
    <property type="match status" value="1"/>
</dbReference>
<dbReference type="InterPro" id="IPR041872">
    <property type="entry name" value="Anticodon_Met"/>
</dbReference>
<dbReference type="InterPro" id="IPR013155">
    <property type="entry name" value="M/V/L/I-tRNA-synth_anticd-bd"/>
</dbReference>
<dbReference type="InterPro" id="IPR023458">
    <property type="entry name" value="Met-tRNA_ligase_1"/>
</dbReference>
<dbReference type="InterPro" id="IPR014758">
    <property type="entry name" value="Met-tRNA_synth"/>
</dbReference>
<dbReference type="InterPro" id="IPR015413">
    <property type="entry name" value="Methionyl/Leucyl_tRNA_Synth"/>
</dbReference>
<dbReference type="InterPro" id="IPR033911">
    <property type="entry name" value="MetRS_core"/>
</dbReference>
<dbReference type="InterPro" id="IPR029038">
    <property type="entry name" value="MetRS_Zn"/>
</dbReference>
<dbReference type="InterPro" id="IPR014729">
    <property type="entry name" value="Rossmann-like_a/b/a_fold"/>
</dbReference>
<dbReference type="InterPro" id="IPR009080">
    <property type="entry name" value="tRNAsynth_Ia_anticodon-bd"/>
</dbReference>
<dbReference type="NCBIfam" id="TIGR00398">
    <property type="entry name" value="metG"/>
    <property type="match status" value="1"/>
</dbReference>
<dbReference type="PANTHER" id="PTHR45765">
    <property type="entry name" value="METHIONINE--TRNA LIGASE"/>
    <property type="match status" value="1"/>
</dbReference>
<dbReference type="PANTHER" id="PTHR45765:SF1">
    <property type="entry name" value="METHIONINE--TRNA LIGASE, CYTOPLASMIC"/>
    <property type="match status" value="1"/>
</dbReference>
<dbReference type="Pfam" id="PF08264">
    <property type="entry name" value="Anticodon_1"/>
    <property type="match status" value="1"/>
</dbReference>
<dbReference type="Pfam" id="PF09334">
    <property type="entry name" value="tRNA-synt_1g"/>
    <property type="match status" value="1"/>
</dbReference>
<dbReference type="PRINTS" id="PR01041">
    <property type="entry name" value="TRNASYNTHMET"/>
</dbReference>
<dbReference type="SUPFAM" id="SSF47323">
    <property type="entry name" value="Anticodon-binding domain of a subclass of class I aminoacyl-tRNA synthetases"/>
    <property type="match status" value="1"/>
</dbReference>
<dbReference type="SUPFAM" id="SSF57770">
    <property type="entry name" value="Methionyl-tRNA synthetase (MetRS), Zn-domain"/>
    <property type="match status" value="1"/>
</dbReference>
<dbReference type="SUPFAM" id="SSF52374">
    <property type="entry name" value="Nucleotidylyl transferase"/>
    <property type="match status" value="1"/>
</dbReference>
<name>SYM_CORDI</name>
<protein>
    <recommendedName>
        <fullName evidence="1">Methionine--tRNA ligase</fullName>
        <ecNumber evidence="1">6.1.1.10</ecNumber>
    </recommendedName>
    <alternativeName>
        <fullName evidence="1">Methionyl-tRNA synthetase</fullName>
        <shortName evidence="1">MetRS</shortName>
    </alternativeName>
</protein>
<evidence type="ECO:0000255" key="1">
    <source>
        <dbReference type="HAMAP-Rule" id="MF_00098"/>
    </source>
</evidence>